<evidence type="ECO:0000255" key="1">
    <source>
        <dbReference type="HAMAP-Rule" id="MF_00374"/>
    </source>
</evidence>
<evidence type="ECO:0000305" key="2"/>
<comment type="similarity">
    <text evidence="1">Belongs to the universal ribosomal protein uL29 family.</text>
</comment>
<proteinExistence type="inferred from homology"/>
<name>RL29_ECO8A</name>
<feature type="chain" id="PRO_1000121767" description="Large ribosomal subunit protein uL29">
    <location>
        <begin position="1"/>
        <end position="63"/>
    </location>
</feature>
<keyword id="KW-0687">Ribonucleoprotein</keyword>
<keyword id="KW-0689">Ribosomal protein</keyword>
<gene>
    <name evidence="1" type="primary">rpmC</name>
    <name type="ordered locus">ECIAI1_3461</name>
</gene>
<accession>B7M1M6</accession>
<protein>
    <recommendedName>
        <fullName evidence="1">Large ribosomal subunit protein uL29</fullName>
    </recommendedName>
    <alternativeName>
        <fullName evidence="2">50S ribosomal protein L29</fullName>
    </alternativeName>
</protein>
<dbReference type="EMBL" id="CU928160">
    <property type="protein sequence ID" value="CAR00263.1"/>
    <property type="molecule type" value="Genomic_DNA"/>
</dbReference>
<dbReference type="RefSeq" id="WP_000644741.1">
    <property type="nucleotide sequence ID" value="NC_011741.1"/>
</dbReference>
<dbReference type="EMDB" id="EMD-7341"/>
<dbReference type="SMR" id="B7M1M6"/>
<dbReference type="GeneID" id="93778675"/>
<dbReference type="KEGG" id="ecr:ECIAI1_3461"/>
<dbReference type="HOGENOM" id="CLU_158491_1_2_6"/>
<dbReference type="GO" id="GO:0022625">
    <property type="term" value="C:cytosolic large ribosomal subunit"/>
    <property type="evidence" value="ECO:0007669"/>
    <property type="project" value="TreeGrafter"/>
</dbReference>
<dbReference type="GO" id="GO:0003735">
    <property type="term" value="F:structural constituent of ribosome"/>
    <property type="evidence" value="ECO:0007669"/>
    <property type="project" value="InterPro"/>
</dbReference>
<dbReference type="GO" id="GO:0006412">
    <property type="term" value="P:translation"/>
    <property type="evidence" value="ECO:0007669"/>
    <property type="project" value="UniProtKB-UniRule"/>
</dbReference>
<dbReference type="CDD" id="cd00427">
    <property type="entry name" value="Ribosomal_L29_HIP"/>
    <property type="match status" value="1"/>
</dbReference>
<dbReference type="Gene3D" id="6.10.140.1970">
    <property type="match status" value="1"/>
</dbReference>
<dbReference type="HAMAP" id="MF_00374">
    <property type="entry name" value="Ribosomal_uL29"/>
    <property type="match status" value="1"/>
</dbReference>
<dbReference type="InterPro" id="IPR050063">
    <property type="entry name" value="Ribosomal_protein_uL29"/>
</dbReference>
<dbReference type="InterPro" id="IPR001854">
    <property type="entry name" value="Ribosomal_uL29"/>
</dbReference>
<dbReference type="InterPro" id="IPR018254">
    <property type="entry name" value="Ribosomal_uL29_CS"/>
</dbReference>
<dbReference type="InterPro" id="IPR036049">
    <property type="entry name" value="Ribosomal_uL29_sf"/>
</dbReference>
<dbReference type="NCBIfam" id="TIGR00012">
    <property type="entry name" value="L29"/>
    <property type="match status" value="1"/>
</dbReference>
<dbReference type="PANTHER" id="PTHR10916">
    <property type="entry name" value="60S RIBOSOMAL PROTEIN L35/50S RIBOSOMAL PROTEIN L29"/>
    <property type="match status" value="1"/>
</dbReference>
<dbReference type="PANTHER" id="PTHR10916:SF0">
    <property type="entry name" value="LARGE RIBOSOMAL SUBUNIT PROTEIN UL29C"/>
    <property type="match status" value="1"/>
</dbReference>
<dbReference type="Pfam" id="PF00831">
    <property type="entry name" value="Ribosomal_L29"/>
    <property type="match status" value="1"/>
</dbReference>
<dbReference type="SUPFAM" id="SSF46561">
    <property type="entry name" value="Ribosomal protein L29 (L29p)"/>
    <property type="match status" value="1"/>
</dbReference>
<dbReference type="PROSITE" id="PS00579">
    <property type="entry name" value="RIBOSOMAL_L29"/>
    <property type="match status" value="1"/>
</dbReference>
<organism>
    <name type="scientific">Escherichia coli O8 (strain IAI1)</name>
    <dbReference type="NCBI Taxonomy" id="585034"/>
    <lineage>
        <taxon>Bacteria</taxon>
        <taxon>Pseudomonadati</taxon>
        <taxon>Pseudomonadota</taxon>
        <taxon>Gammaproteobacteria</taxon>
        <taxon>Enterobacterales</taxon>
        <taxon>Enterobacteriaceae</taxon>
        <taxon>Escherichia</taxon>
    </lineage>
</organism>
<reference key="1">
    <citation type="journal article" date="2009" name="PLoS Genet.">
        <title>Organised genome dynamics in the Escherichia coli species results in highly diverse adaptive paths.</title>
        <authorList>
            <person name="Touchon M."/>
            <person name="Hoede C."/>
            <person name="Tenaillon O."/>
            <person name="Barbe V."/>
            <person name="Baeriswyl S."/>
            <person name="Bidet P."/>
            <person name="Bingen E."/>
            <person name="Bonacorsi S."/>
            <person name="Bouchier C."/>
            <person name="Bouvet O."/>
            <person name="Calteau A."/>
            <person name="Chiapello H."/>
            <person name="Clermont O."/>
            <person name="Cruveiller S."/>
            <person name="Danchin A."/>
            <person name="Diard M."/>
            <person name="Dossat C."/>
            <person name="Karoui M.E."/>
            <person name="Frapy E."/>
            <person name="Garry L."/>
            <person name="Ghigo J.M."/>
            <person name="Gilles A.M."/>
            <person name="Johnson J."/>
            <person name="Le Bouguenec C."/>
            <person name="Lescat M."/>
            <person name="Mangenot S."/>
            <person name="Martinez-Jehanne V."/>
            <person name="Matic I."/>
            <person name="Nassif X."/>
            <person name="Oztas S."/>
            <person name="Petit M.A."/>
            <person name="Pichon C."/>
            <person name="Rouy Z."/>
            <person name="Ruf C.S."/>
            <person name="Schneider D."/>
            <person name="Tourret J."/>
            <person name="Vacherie B."/>
            <person name="Vallenet D."/>
            <person name="Medigue C."/>
            <person name="Rocha E.P.C."/>
            <person name="Denamur E."/>
        </authorList>
    </citation>
    <scope>NUCLEOTIDE SEQUENCE [LARGE SCALE GENOMIC DNA]</scope>
    <source>
        <strain>IAI1</strain>
    </source>
</reference>
<sequence>MKAKELREKSVEELNTELLNLLREQFNLRMQAASGQLQQSHLLKQVRRDVARVKTLLNEKAGA</sequence>